<gene>
    <name type="primary">traJ</name>
</gene>
<keyword id="KW-0010">Activator</keyword>
<keyword id="KW-0184">Conjugation</keyword>
<keyword id="KW-0963">Cytoplasm</keyword>
<keyword id="KW-0238">DNA-binding</keyword>
<keyword id="KW-0614">Plasmid</keyword>
<keyword id="KW-0804">Transcription</keyword>
<keyword id="KW-0805">Transcription regulation</keyword>
<dbReference type="EMBL" id="X55896">
    <property type="protein sequence ID" value="CAA39384.1"/>
    <property type="molecule type" value="Genomic_DNA"/>
</dbReference>
<dbReference type="PIR" id="S21514">
    <property type="entry name" value="S21514"/>
</dbReference>
<dbReference type="GO" id="GO:0005737">
    <property type="term" value="C:cytoplasm"/>
    <property type="evidence" value="ECO:0007669"/>
    <property type="project" value="UniProtKB-SubCell"/>
</dbReference>
<dbReference type="GO" id="GO:0003677">
    <property type="term" value="F:DNA binding"/>
    <property type="evidence" value="ECO:0007669"/>
    <property type="project" value="UniProtKB-KW"/>
</dbReference>
<dbReference type="Gene3D" id="3.30.450.20">
    <property type="entry name" value="PAS domain"/>
    <property type="match status" value="1"/>
</dbReference>
<sequence length="76" mass="8660">MCVMDTRERALIRQSGLPEIILSAKYPVCVRTESGKFIDSNSVFLHLIKCQNSNSEIWFSGIDIDTQILFHTVEVD</sequence>
<name>TRAJ7_ECOLX</name>
<evidence type="ECO:0000250" key="1"/>
<comment type="function">
    <text>This protein is essential for positively regulating the expression of transfer genes that are involved in the conjugal transfer of DNA between bacterial cells.</text>
</comment>
<comment type="subcellular location">
    <subcellularLocation>
        <location evidence="1">Cytoplasm</location>
    </subcellularLocation>
</comment>
<organism>
    <name type="scientific">Escherichia coli</name>
    <dbReference type="NCBI Taxonomy" id="562"/>
    <lineage>
        <taxon>Bacteria</taxon>
        <taxon>Pseudomonadati</taxon>
        <taxon>Pseudomonadota</taxon>
        <taxon>Gammaproteobacteria</taxon>
        <taxon>Enterobacterales</taxon>
        <taxon>Enterobacteriaceae</taxon>
        <taxon>Escherichia</taxon>
    </lineage>
</organism>
<accession>P33785</accession>
<feature type="chain" id="PRO_0000068462" description="Protein TraJ">
    <location>
        <begin position="1"/>
        <end position="76" status="greater than"/>
    </location>
</feature>
<feature type="non-terminal residue">
    <location>
        <position position="76"/>
    </location>
</feature>
<reference key="1">
    <citation type="journal article" date="1992" name="Mol. Gen. Genet.">
        <title>Characterization and nucleotide sequence of the oriT-traM-finP region of the IncFVII plasmid pSU233.</title>
        <authorList>
            <person name="Salazar L."/>
            <person name="Lopez J."/>
            <person name="Andres I."/>
            <person name="Ortiz J.M."/>
            <person name="Rodriguez J.C."/>
        </authorList>
    </citation>
    <scope>NUCLEOTIDE SEQUENCE [GENOMIC DNA]</scope>
</reference>
<protein>
    <recommendedName>
        <fullName>Protein TraJ</fullName>
    </recommendedName>
</protein>
<proteinExistence type="inferred from homology"/>
<geneLocation type="plasmid">
    <name>IncFVII pSU233</name>
</geneLocation>